<feature type="chain" id="PRO_1000066971" description="Glucosamine-6-phosphate deaminase">
    <location>
        <begin position="1"/>
        <end position="241"/>
    </location>
</feature>
<feature type="active site" description="Proton acceptor; for enolization step" evidence="1">
    <location>
        <position position="67"/>
    </location>
</feature>
<feature type="active site" description="For ring-opening step" evidence="1">
    <location>
        <position position="136"/>
    </location>
</feature>
<feature type="active site" description="Proton acceptor; for ring-opening step" evidence="1">
    <location>
        <position position="138"/>
    </location>
</feature>
<feature type="active site" description="For ring-opening step" evidence="1">
    <location>
        <position position="143"/>
    </location>
</feature>
<organism>
    <name type="scientific">Clostridium novyi (strain NT)</name>
    <dbReference type="NCBI Taxonomy" id="386415"/>
    <lineage>
        <taxon>Bacteria</taxon>
        <taxon>Bacillati</taxon>
        <taxon>Bacillota</taxon>
        <taxon>Clostridia</taxon>
        <taxon>Eubacteriales</taxon>
        <taxon>Clostridiaceae</taxon>
        <taxon>Clostridium</taxon>
    </lineage>
</organism>
<name>NAGB_CLONN</name>
<protein>
    <recommendedName>
        <fullName evidence="1">Glucosamine-6-phosphate deaminase</fullName>
        <ecNumber evidence="1">3.5.99.6</ecNumber>
    </recommendedName>
    <alternativeName>
        <fullName evidence="1">GlcN6P deaminase</fullName>
        <shortName evidence="1">GNPDA</shortName>
    </alternativeName>
    <alternativeName>
        <fullName evidence="1">Glucosamine-6-phosphate isomerase</fullName>
    </alternativeName>
</protein>
<comment type="function">
    <text evidence="1">Catalyzes the reversible isomerization-deamination of glucosamine 6-phosphate (GlcN6P) to form fructose 6-phosphate (Fru6P) and ammonium ion.</text>
</comment>
<comment type="catalytic activity">
    <reaction evidence="1">
        <text>alpha-D-glucosamine 6-phosphate + H2O = beta-D-fructose 6-phosphate + NH4(+)</text>
        <dbReference type="Rhea" id="RHEA:12172"/>
        <dbReference type="ChEBI" id="CHEBI:15377"/>
        <dbReference type="ChEBI" id="CHEBI:28938"/>
        <dbReference type="ChEBI" id="CHEBI:57634"/>
        <dbReference type="ChEBI" id="CHEBI:75989"/>
        <dbReference type="EC" id="3.5.99.6"/>
    </reaction>
</comment>
<comment type="pathway">
    <text evidence="1">Amino-sugar metabolism; N-acetylneuraminate degradation; D-fructose 6-phosphate from N-acetylneuraminate: step 5/5.</text>
</comment>
<comment type="similarity">
    <text evidence="1">Belongs to the glucosamine/galactosamine-6-phosphate isomerase family. NagB subfamily.</text>
</comment>
<keyword id="KW-0119">Carbohydrate metabolism</keyword>
<keyword id="KW-0378">Hydrolase</keyword>
<keyword id="KW-1185">Reference proteome</keyword>
<reference key="1">
    <citation type="journal article" date="2006" name="Nat. Biotechnol.">
        <title>The genome and transcriptomes of the anti-tumor agent Clostridium novyi-NT.</title>
        <authorList>
            <person name="Bettegowda C."/>
            <person name="Huang X."/>
            <person name="Lin J."/>
            <person name="Cheong I."/>
            <person name="Kohli M."/>
            <person name="Szabo S.A."/>
            <person name="Zhang X."/>
            <person name="Diaz L.A. Jr."/>
            <person name="Velculescu V.E."/>
            <person name="Parmigiani G."/>
            <person name="Kinzler K.W."/>
            <person name="Vogelstein B."/>
            <person name="Zhou S."/>
        </authorList>
    </citation>
    <scope>NUCLEOTIDE SEQUENCE [LARGE SCALE GENOMIC DNA]</scope>
    <source>
        <strain>NT</strain>
    </source>
</reference>
<dbReference type="EC" id="3.5.99.6" evidence="1"/>
<dbReference type="EMBL" id="CP000382">
    <property type="protein sequence ID" value="ABK60881.1"/>
    <property type="molecule type" value="Genomic_DNA"/>
</dbReference>
<dbReference type="RefSeq" id="WP_011721571.1">
    <property type="nucleotide sequence ID" value="NC_008593.1"/>
</dbReference>
<dbReference type="SMR" id="A0PYW1"/>
<dbReference type="STRING" id="386415.NT01CX_1482"/>
<dbReference type="KEGG" id="cno:NT01CX_1482"/>
<dbReference type="PATRIC" id="fig|386415.7.peg.589"/>
<dbReference type="eggNOG" id="COG0363">
    <property type="taxonomic scope" value="Bacteria"/>
</dbReference>
<dbReference type="HOGENOM" id="CLU_049611_1_1_9"/>
<dbReference type="UniPathway" id="UPA00629">
    <property type="reaction ID" value="UER00684"/>
</dbReference>
<dbReference type="Proteomes" id="UP000008220">
    <property type="component" value="Chromosome"/>
</dbReference>
<dbReference type="GO" id="GO:0005737">
    <property type="term" value="C:cytoplasm"/>
    <property type="evidence" value="ECO:0007669"/>
    <property type="project" value="TreeGrafter"/>
</dbReference>
<dbReference type="GO" id="GO:0004342">
    <property type="term" value="F:glucosamine-6-phosphate deaminase activity"/>
    <property type="evidence" value="ECO:0007669"/>
    <property type="project" value="UniProtKB-UniRule"/>
</dbReference>
<dbReference type="GO" id="GO:0042802">
    <property type="term" value="F:identical protein binding"/>
    <property type="evidence" value="ECO:0007669"/>
    <property type="project" value="TreeGrafter"/>
</dbReference>
<dbReference type="GO" id="GO:0005975">
    <property type="term" value="P:carbohydrate metabolic process"/>
    <property type="evidence" value="ECO:0007669"/>
    <property type="project" value="InterPro"/>
</dbReference>
<dbReference type="GO" id="GO:0006043">
    <property type="term" value="P:glucosamine catabolic process"/>
    <property type="evidence" value="ECO:0007669"/>
    <property type="project" value="TreeGrafter"/>
</dbReference>
<dbReference type="GO" id="GO:0006046">
    <property type="term" value="P:N-acetylglucosamine catabolic process"/>
    <property type="evidence" value="ECO:0007669"/>
    <property type="project" value="TreeGrafter"/>
</dbReference>
<dbReference type="GO" id="GO:0019262">
    <property type="term" value="P:N-acetylneuraminate catabolic process"/>
    <property type="evidence" value="ECO:0007669"/>
    <property type="project" value="UniProtKB-UniRule"/>
</dbReference>
<dbReference type="CDD" id="cd01399">
    <property type="entry name" value="GlcN6P_deaminase"/>
    <property type="match status" value="1"/>
</dbReference>
<dbReference type="FunFam" id="3.40.50.1360:FF:000003">
    <property type="entry name" value="Glucosamine-6-phosphate deaminase"/>
    <property type="match status" value="1"/>
</dbReference>
<dbReference type="Gene3D" id="3.40.50.1360">
    <property type="match status" value="1"/>
</dbReference>
<dbReference type="HAMAP" id="MF_01241">
    <property type="entry name" value="GlcN6P_deamin"/>
    <property type="match status" value="1"/>
</dbReference>
<dbReference type="InterPro" id="IPR006148">
    <property type="entry name" value="Glc/Gal-6P_isomerase"/>
</dbReference>
<dbReference type="InterPro" id="IPR004547">
    <property type="entry name" value="Glucosamine6P_isomerase"/>
</dbReference>
<dbReference type="InterPro" id="IPR018321">
    <property type="entry name" value="Glucosamine6P_isomerase_CS"/>
</dbReference>
<dbReference type="InterPro" id="IPR037171">
    <property type="entry name" value="NagB/RpiA_transferase-like"/>
</dbReference>
<dbReference type="NCBIfam" id="TIGR00502">
    <property type="entry name" value="nagB"/>
    <property type="match status" value="1"/>
</dbReference>
<dbReference type="NCBIfam" id="NF001684">
    <property type="entry name" value="PRK00443.1-4"/>
    <property type="match status" value="1"/>
</dbReference>
<dbReference type="PANTHER" id="PTHR11280">
    <property type="entry name" value="GLUCOSAMINE-6-PHOSPHATE ISOMERASE"/>
    <property type="match status" value="1"/>
</dbReference>
<dbReference type="PANTHER" id="PTHR11280:SF5">
    <property type="entry name" value="GLUCOSAMINE-6-PHOSPHATE ISOMERASE"/>
    <property type="match status" value="1"/>
</dbReference>
<dbReference type="Pfam" id="PF01182">
    <property type="entry name" value="Glucosamine_iso"/>
    <property type="match status" value="1"/>
</dbReference>
<dbReference type="SUPFAM" id="SSF100950">
    <property type="entry name" value="NagB/RpiA/CoA transferase-like"/>
    <property type="match status" value="1"/>
</dbReference>
<dbReference type="PROSITE" id="PS01161">
    <property type="entry name" value="GLC_GALNAC_ISOMERASE"/>
    <property type="match status" value="1"/>
</dbReference>
<accession>A0PYW1</accession>
<gene>
    <name evidence="1" type="primary">nagB</name>
    <name type="ordered locus">NT01CX_1482</name>
</gene>
<evidence type="ECO:0000255" key="1">
    <source>
        <dbReference type="HAMAP-Rule" id="MF_01241"/>
    </source>
</evidence>
<sequence>MKILSFKDYNELSKEASKIVLNQVISKPNSVLGLATGSTPLGMYKNLIVAYQNKNIDFSKIKTFNLDEYYGLSKHNNQSYYHYMMENLFNHINIDINNINIPNGTASDILKECSDYEDKIKNYNGIDLQILGIGVNGHIGFNEPSTYFEPSTHVVTLDKKTIESNSRFFSSKEEVPTKAISMGIKTIMNAKKIILLANGKNKADAIFKTVNGKIDPNIPASILQLHNDVTLILDKDAASKL</sequence>
<proteinExistence type="inferred from homology"/>